<protein>
    <recommendedName>
        <fullName>Ingression protein 1</fullName>
    </recommendedName>
</protein>
<reference key="1">
    <citation type="journal article" date="1996" name="Yeast">
        <title>The sequence of 36.8 kb from the left arm of chromosome XIV reveals 24 complete open reading frames: 18 correspond to new genes, one of which encodes a protein similar to the human myotonic dystrophy kinase.</title>
        <authorList>
            <person name="Nasr F."/>
            <person name="Becam A.-M."/>
            <person name="Herbert C.J."/>
        </authorList>
    </citation>
    <scope>NUCLEOTIDE SEQUENCE [GENOMIC DNA]</scope>
    <source>
        <strain>ATCC 96604 / S288c / FY1679</strain>
    </source>
</reference>
<reference key="2">
    <citation type="journal article" date="1997" name="Nature">
        <title>The nucleotide sequence of Saccharomyces cerevisiae chromosome XIV and its evolutionary implications.</title>
        <authorList>
            <person name="Philippsen P."/>
            <person name="Kleine K."/>
            <person name="Poehlmann R."/>
            <person name="Duesterhoeft A."/>
            <person name="Hamberg K."/>
            <person name="Hegemann J.H."/>
            <person name="Obermaier B."/>
            <person name="Urrestarazu L.A."/>
            <person name="Aert R."/>
            <person name="Albermann K."/>
            <person name="Altmann R."/>
            <person name="Andre B."/>
            <person name="Baladron V."/>
            <person name="Ballesta J.P.G."/>
            <person name="Becam A.-M."/>
            <person name="Beinhauer J.D."/>
            <person name="Boskovic J."/>
            <person name="Buitrago M.J."/>
            <person name="Bussereau F."/>
            <person name="Coster F."/>
            <person name="Crouzet M."/>
            <person name="D'Angelo M."/>
            <person name="Dal Pero F."/>
            <person name="De Antoni A."/>
            <person name="del Rey F."/>
            <person name="Doignon F."/>
            <person name="Domdey H."/>
            <person name="Dubois E."/>
            <person name="Fiedler T.A."/>
            <person name="Fleig U."/>
            <person name="Floeth M."/>
            <person name="Fritz C."/>
            <person name="Gaillardin C."/>
            <person name="Garcia-Cantalejo J.M."/>
            <person name="Glansdorff N."/>
            <person name="Goffeau A."/>
            <person name="Gueldener U."/>
            <person name="Herbert C.J."/>
            <person name="Heumann K."/>
            <person name="Heuss-Neitzel D."/>
            <person name="Hilbert H."/>
            <person name="Hinni K."/>
            <person name="Iraqui Houssaini I."/>
            <person name="Jacquet M."/>
            <person name="Jimenez A."/>
            <person name="Jonniaux J.-L."/>
            <person name="Karpfinger-Hartl L."/>
            <person name="Lanfranchi G."/>
            <person name="Lepingle A."/>
            <person name="Levesque H."/>
            <person name="Lyck R."/>
            <person name="Maftahi M."/>
            <person name="Mallet L."/>
            <person name="Maurer C.T.C."/>
            <person name="Messenguy F."/>
            <person name="Mewes H.-W."/>
            <person name="Moestl D."/>
            <person name="Nasr F."/>
            <person name="Nicaud J.-M."/>
            <person name="Niedenthal R.K."/>
            <person name="Pandolfo D."/>
            <person name="Pierard A."/>
            <person name="Piravandi E."/>
            <person name="Planta R.J."/>
            <person name="Pohl T.M."/>
            <person name="Purnelle B."/>
            <person name="Rebischung C."/>
            <person name="Remacha M.A."/>
            <person name="Revuelta J.L."/>
            <person name="Rinke M."/>
            <person name="Saiz J.E."/>
            <person name="Sartorello F."/>
            <person name="Scherens B."/>
            <person name="Sen-Gupta M."/>
            <person name="Soler-Mira A."/>
            <person name="Urbanus J.H.M."/>
            <person name="Valle G."/>
            <person name="Van Dyck L."/>
            <person name="Verhasselt P."/>
            <person name="Vierendeels F."/>
            <person name="Vissers S."/>
            <person name="Voet M."/>
            <person name="Volckaert G."/>
            <person name="Wach A."/>
            <person name="Wambutt R."/>
            <person name="Wedler H."/>
            <person name="Zollner A."/>
            <person name="Hani J."/>
        </authorList>
    </citation>
    <scope>NUCLEOTIDE SEQUENCE [LARGE SCALE GENOMIC DNA]</scope>
    <source>
        <strain>ATCC 204508 / S288c</strain>
    </source>
</reference>
<reference key="3">
    <citation type="journal article" date="2014" name="G3 (Bethesda)">
        <title>The reference genome sequence of Saccharomyces cerevisiae: Then and now.</title>
        <authorList>
            <person name="Engel S.R."/>
            <person name="Dietrich F.S."/>
            <person name="Fisk D.G."/>
            <person name="Binkley G."/>
            <person name="Balakrishnan R."/>
            <person name="Costanzo M.C."/>
            <person name="Dwight S.S."/>
            <person name="Hitz B.C."/>
            <person name="Karra K."/>
            <person name="Nash R.S."/>
            <person name="Weng S."/>
            <person name="Wong E.D."/>
            <person name="Lloyd P."/>
            <person name="Skrzypek M.S."/>
            <person name="Miyasato S.R."/>
            <person name="Simison M."/>
            <person name="Cherry J.M."/>
        </authorList>
    </citation>
    <scope>GENOME REANNOTATION</scope>
    <source>
        <strain>ATCC 204508 / S288c</strain>
    </source>
</reference>
<reference key="4">
    <citation type="journal article" date="2007" name="Genome Res.">
        <title>Approaching a complete repository of sequence-verified protein-encoding clones for Saccharomyces cerevisiae.</title>
        <authorList>
            <person name="Hu Y."/>
            <person name="Rolfs A."/>
            <person name="Bhullar B."/>
            <person name="Murthy T.V.S."/>
            <person name="Zhu C."/>
            <person name="Berger M.F."/>
            <person name="Camargo A.A."/>
            <person name="Kelley F."/>
            <person name="McCarron S."/>
            <person name="Jepson D."/>
            <person name="Richardson A."/>
            <person name="Raphael J."/>
            <person name="Moreira D."/>
            <person name="Taycher E."/>
            <person name="Zuo D."/>
            <person name="Mohr S."/>
            <person name="Kane M.F."/>
            <person name="Williamson J."/>
            <person name="Simpson A.J.G."/>
            <person name="Bulyk M.L."/>
            <person name="Harlow E."/>
            <person name="Marsischky G."/>
            <person name="Kolodner R.D."/>
            <person name="LaBaer J."/>
        </authorList>
    </citation>
    <scope>NUCLEOTIDE SEQUENCE [GENOMIC DNA]</scope>
    <source>
        <strain>ATCC 204508 / S288c</strain>
    </source>
</reference>
<reference key="5">
    <citation type="journal article" date="2008" name="Nat. Cell Biol.">
        <title>Inn1 couples contraction of the actomyosin ring to membrane ingression during cytokinesis in budding yeast.</title>
        <authorList>
            <person name="Sanchez-Diaz A."/>
            <person name="Marchesi V."/>
            <person name="Murray S."/>
            <person name="Jones R."/>
            <person name="Pereira G."/>
            <person name="Edmondson R."/>
            <person name="Allen T."/>
            <person name="Labib K."/>
        </authorList>
    </citation>
    <scope>FUNCTION</scope>
    <scope>SUBCELLULAR LOCATION</scope>
    <scope>DOMAIN</scope>
    <scope>INTERACTION WITH CYK2 AND IQG1</scope>
    <scope>MUTAGENESIS OF LYS-28 AND LYS-31</scope>
</reference>
<reference key="6">
    <citation type="journal article" date="2009" name="J. Cell Biol.">
        <title>Role of Inn1 and its interactions with Hof1 and Cyk3 in promoting cleavage furrow and septum formation in S. cerevisiae.</title>
        <authorList>
            <person name="Nishihama R."/>
            <person name="Schreiter J.H."/>
            <person name="Onishi M."/>
            <person name="Vallen E.A."/>
            <person name="Hanna J."/>
            <person name="Moravcevic K."/>
            <person name="Lippincott M.F."/>
            <person name="Han H."/>
            <person name="Lemmon M.A."/>
            <person name="Pringle J.R."/>
            <person name="Bi E."/>
        </authorList>
    </citation>
    <scope>FUNCTION</scope>
    <scope>SUBCELLULAR LOCATION</scope>
    <scope>INTERACTION WITH CYK2 AND CYK3</scope>
</reference>
<reference key="7">
    <citation type="journal article" date="2009" name="Mol. Genet. Genomics">
        <title>Cyk3 acts in actomyosin ring independent cytokinesis by recruiting Inn1 to the yeast bud neck.</title>
        <authorList>
            <person name="Jendretzki A."/>
            <person name="Ciklic I."/>
            <person name="Rodicio R."/>
            <person name="Schmitz H.P."/>
            <person name="Heinisch J.J."/>
        </authorList>
    </citation>
    <scope>FUNCTION</scope>
    <scope>SUBCELLULAR LOCATION</scope>
    <scope>INTERACTION WITH CYK3</scope>
</reference>
<reference key="8">
    <citation type="journal article" date="2009" name="Science">
        <title>Global analysis of Cdk1 substrate phosphorylation sites provides insights into evolution.</title>
        <authorList>
            <person name="Holt L.J."/>
            <person name="Tuch B.B."/>
            <person name="Villen J."/>
            <person name="Johnson A.D."/>
            <person name="Gygi S.P."/>
            <person name="Morgan D.O."/>
        </authorList>
    </citation>
    <scope>PHOSPHORYLATION [LARGE SCALE ANALYSIS] AT SER-392</scope>
    <scope>IDENTIFICATION BY MASS SPECTROMETRY [LARGE SCALE ANALYSIS]</scope>
</reference>
<reference key="9">
    <citation type="journal article" date="2010" name="J. Cell Sci.">
        <title>Targeted localization of Inn1, Cyk3 and Chs2 by the mitotic-exit network regulates cytokinesis in budding yeast.</title>
        <authorList>
            <person name="Meitinger F."/>
            <person name="Petrova B."/>
            <person name="Lombardi I.M."/>
            <person name="Bertazzi D.T."/>
            <person name="Hub B."/>
            <person name="Zentgraf H."/>
            <person name="Pereira G."/>
        </authorList>
    </citation>
    <scope>SUBCELLULAR LOCATION</scope>
</reference>
<comment type="function">
    <text evidence="3 4 5">Required for the ingression of the plasma membrane into the bud neck at the end of cytokinesis, leading to the separation of the mother and daughter cells. Stimulates the synthesis of the primary septum (PS) by CHS2.</text>
</comment>
<comment type="subunit">
    <text evidence="3 4 5">Interacts with CYK2, CYK3 and IQG1.</text>
</comment>
<comment type="interaction">
    <interactant intactId="EBI-28955">
        <id>P53901</id>
    </interactant>
    <interactant intactId="EBI-5412">
        <id>Q05080</id>
        <label>HOF1</label>
    </interactant>
    <organismsDiffer>false</organismsDiffer>
    <experiments>6</experiments>
</comment>
<comment type="interaction">
    <interactant intactId="EBI-28955">
        <id>P53901</id>
    </interactant>
    <interactant intactId="EBI-13206">
        <id>P80667</id>
        <label>PEX13</label>
    </interactant>
    <organismsDiffer>false</organismsDiffer>
    <experiments>2</experiments>
</comment>
<comment type="interaction">
    <interactant intactId="EBI-28955">
        <id>P53901</id>
    </interactant>
    <interactant intactId="EBI-18140">
        <id>P40073</id>
        <label>SHO1</label>
    </interactant>
    <organismsDiffer>false</organismsDiffer>
    <experiments>4</experiments>
</comment>
<comment type="subcellular location">
    <subcellularLocation>
        <location evidence="3 4 5 6">Bud neck</location>
    </subcellularLocation>
    <text>Localizes at the contractile actinomyosin ring at the end of cytokinesis. Recruitment to the bud neck requires either CYK2 or CYK3.</text>
</comment>
<comment type="domain">
    <text evidence="3">The C2 domain is essential for membrane ingression during cytokinesis, but not for recruitment to the actomyosin ring.</text>
</comment>
<comment type="similarity">
    <text evidence="7">Belongs to the INN1/fic1 family.</text>
</comment>
<accession>P53901</accession>
<accession>D6W131</accession>
<accession>Q6Q5J6</accession>
<keyword id="KW-0131">Cell cycle</keyword>
<keyword id="KW-0132">Cell division</keyword>
<keyword id="KW-0498">Mitosis</keyword>
<keyword id="KW-0597">Phosphoprotein</keyword>
<keyword id="KW-1185">Reference proteome</keyword>
<dbReference type="EMBL" id="X92517">
    <property type="protein sequence ID" value="CAA63287.1"/>
    <property type="molecule type" value="Genomic_DNA"/>
</dbReference>
<dbReference type="EMBL" id="Z71428">
    <property type="protein sequence ID" value="CAA96039.1"/>
    <property type="molecule type" value="Genomic_DNA"/>
</dbReference>
<dbReference type="EMBL" id="AY558026">
    <property type="protein sequence ID" value="AAS56352.1"/>
    <property type="molecule type" value="Genomic_DNA"/>
</dbReference>
<dbReference type="EMBL" id="BK006947">
    <property type="protein sequence ID" value="DAA10397.1"/>
    <property type="molecule type" value="Genomic_DNA"/>
</dbReference>
<dbReference type="PIR" id="S60975">
    <property type="entry name" value="S60975"/>
</dbReference>
<dbReference type="RefSeq" id="NP_014247.1">
    <property type="nucleotide sequence ID" value="NM_001182990.1"/>
</dbReference>
<dbReference type="SMR" id="P53901"/>
<dbReference type="BioGRID" id="35677">
    <property type="interactions" value="204"/>
</dbReference>
<dbReference type="ComplexPortal" id="CPX-1140">
    <property type="entry name" value="HICS complex"/>
</dbReference>
<dbReference type="DIP" id="DIP-4339N"/>
<dbReference type="FunCoup" id="P53901">
    <property type="interactions" value="195"/>
</dbReference>
<dbReference type="IntAct" id="P53901">
    <property type="interactions" value="12"/>
</dbReference>
<dbReference type="MINT" id="P53901"/>
<dbReference type="STRING" id="4932.YNL152W"/>
<dbReference type="GlyGen" id="P53901">
    <property type="glycosylation" value="1 site, 1 O-linked glycan (1 site)"/>
</dbReference>
<dbReference type="iPTMnet" id="P53901"/>
<dbReference type="PaxDb" id="4932-YNL152W"/>
<dbReference type="PeptideAtlas" id="P53901"/>
<dbReference type="TopDownProteomics" id="P53901"/>
<dbReference type="EnsemblFungi" id="YNL152W_mRNA">
    <property type="protein sequence ID" value="YNL152W"/>
    <property type="gene ID" value="YNL152W"/>
</dbReference>
<dbReference type="GeneID" id="855570"/>
<dbReference type="KEGG" id="sce:YNL152W"/>
<dbReference type="AGR" id="SGD:S000005096"/>
<dbReference type="SGD" id="S000005096">
    <property type="gene designation" value="INN1"/>
</dbReference>
<dbReference type="VEuPathDB" id="FungiDB:YNL152W"/>
<dbReference type="eggNOG" id="ENOG502QSUF">
    <property type="taxonomic scope" value="Eukaryota"/>
</dbReference>
<dbReference type="HOGENOM" id="CLU_673016_0_0_1"/>
<dbReference type="InParanoid" id="P53901"/>
<dbReference type="OMA" id="TRFHFAN"/>
<dbReference type="OrthoDB" id="270970at2759"/>
<dbReference type="BioCyc" id="YEAST:G3O-33169-MONOMER"/>
<dbReference type="BioGRID-ORCS" id="855570">
    <property type="hits" value="8 hits in 10 CRISPR screens"/>
</dbReference>
<dbReference type="PRO" id="PR:P53901"/>
<dbReference type="Proteomes" id="UP000002311">
    <property type="component" value="Chromosome XIV"/>
</dbReference>
<dbReference type="RNAct" id="P53901">
    <property type="molecule type" value="protein"/>
</dbReference>
<dbReference type="GO" id="GO:0005935">
    <property type="term" value="C:cellular bud neck"/>
    <property type="evidence" value="ECO:0000303"/>
    <property type="project" value="ComplexPortal"/>
</dbReference>
<dbReference type="GO" id="GO:0000142">
    <property type="term" value="C:cellular bud neck contractile ring"/>
    <property type="evidence" value="ECO:0000314"/>
    <property type="project" value="SGD"/>
</dbReference>
<dbReference type="GO" id="GO:0032154">
    <property type="term" value="C:cleavage furrow"/>
    <property type="evidence" value="ECO:0000315"/>
    <property type="project" value="CACAO"/>
</dbReference>
<dbReference type="GO" id="GO:0005737">
    <property type="term" value="C:cytoplasm"/>
    <property type="evidence" value="ECO:0007005"/>
    <property type="project" value="SGD"/>
</dbReference>
<dbReference type="GO" id="GO:0044697">
    <property type="term" value="C:HICS complex"/>
    <property type="evidence" value="ECO:0000353"/>
    <property type="project" value="SGD"/>
</dbReference>
<dbReference type="GO" id="GO:0016020">
    <property type="term" value="C:membrane"/>
    <property type="evidence" value="ECO:0000303"/>
    <property type="project" value="ComplexPortal"/>
</dbReference>
<dbReference type="GO" id="GO:0030234">
    <property type="term" value="F:enzyme regulator activity"/>
    <property type="evidence" value="ECO:0000316"/>
    <property type="project" value="SGD"/>
</dbReference>
<dbReference type="GO" id="GO:0051276">
    <property type="term" value="P:chromosome organization"/>
    <property type="evidence" value="ECO:0000315"/>
    <property type="project" value="SGD"/>
</dbReference>
<dbReference type="GO" id="GO:0000281">
    <property type="term" value="P:mitotic cytokinesis"/>
    <property type="evidence" value="ECO:0000315"/>
    <property type="project" value="SGD"/>
</dbReference>
<dbReference type="GO" id="GO:1902410">
    <property type="term" value="P:mitotic cytokinetic process"/>
    <property type="evidence" value="ECO:0000303"/>
    <property type="project" value="ComplexPortal"/>
</dbReference>
<dbReference type="GO" id="GO:1990344">
    <property type="term" value="P:secondary cell septum biogenesis"/>
    <property type="evidence" value="ECO:0000315"/>
    <property type="project" value="SGD"/>
</dbReference>
<dbReference type="CDD" id="cd08681">
    <property type="entry name" value="C2_fungal_Inn1p-like"/>
    <property type="match status" value="1"/>
</dbReference>
<dbReference type="Gene3D" id="2.60.40.150">
    <property type="entry name" value="C2 domain"/>
    <property type="match status" value="1"/>
</dbReference>
<dbReference type="InterPro" id="IPR000008">
    <property type="entry name" value="C2_dom"/>
</dbReference>
<dbReference type="InterPro" id="IPR035892">
    <property type="entry name" value="C2_domain_sf"/>
</dbReference>
<dbReference type="InterPro" id="IPR037791">
    <property type="entry name" value="C2_fungal_Inn1"/>
</dbReference>
<dbReference type="InterPro" id="IPR052981">
    <property type="entry name" value="Ingression_C2_domain"/>
</dbReference>
<dbReference type="PANTHER" id="PTHR47052">
    <property type="entry name" value="CONSERVED SERINE PROLINE-RICH PROTEIN (AFU_ORTHOLOGUE AFUA_2G01790)"/>
    <property type="match status" value="1"/>
</dbReference>
<dbReference type="PANTHER" id="PTHR47052:SF3">
    <property type="entry name" value="INGRESSION PROTEIN 1"/>
    <property type="match status" value="1"/>
</dbReference>
<dbReference type="Pfam" id="PF00168">
    <property type="entry name" value="C2"/>
    <property type="match status" value="1"/>
</dbReference>
<dbReference type="SMART" id="SM00239">
    <property type="entry name" value="C2"/>
    <property type="match status" value="1"/>
</dbReference>
<dbReference type="SUPFAM" id="SSF49562">
    <property type="entry name" value="C2 domain (Calcium/lipid-binding domain, CaLB)"/>
    <property type="match status" value="1"/>
</dbReference>
<dbReference type="PROSITE" id="PS50004">
    <property type="entry name" value="C2"/>
    <property type="match status" value="1"/>
</dbReference>
<evidence type="ECO:0000255" key="1">
    <source>
        <dbReference type="PROSITE-ProRule" id="PRU00041"/>
    </source>
</evidence>
<evidence type="ECO:0000256" key="2">
    <source>
        <dbReference type="SAM" id="MobiDB-lite"/>
    </source>
</evidence>
<evidence type="ECO:0000269" key="3">
    <source>
    </source>
</evidence>
<evidence type="ECO:0000269" key="4">
    <source>
    </source>
</evidence>
<evidence type="ECO:0000269" key="5">
    <source>
    </source>
</evidence>
<evidence type="ECO:0000269" key="6">
    <source>
    </source>
</evidence>
<evidence type="ECO:0000305" key="7"/>
<evidence type="ECO:0007744" key="8">
    <source>
    </source>
</evidence>
<feature type="chain" id="PRO_0000203419" description="Ingression protein 1">
    <location>
        <begin position="1"/>
        <end position="409"/>
    </location>
</feature>
<feature type="domain" description="C2" evidence="1">
    <location>
        <begin position="1"/>
        <end position="114"/>
    </location>
</feature>
<feature type="region of interest" description="Disordered" evidence="2">
    <location>
        <begin position="300"/>
        <end position="409"/>
    </location>
</feature>
<feature type="compositionally biased region" description="Acidic residues" evidence="2">
    <location>
        <begin position="302"/>
        <end position="313"/>
    </location>
</feature>
<feature type="compositionally biased region" description="Polar residues" evidence="2">
    <location>
        <begin position="315"/>
        <end position="328"/>
    </location>
</feature>
<feature type="compositionally biased region" description="Low complexity" evidence="2">
    <location>
        <begin position="360"/>
        <end position="377"/>
    </location>
</feature>
<feature type="compositionally biased region" description="Polar residues" evidence="2">
    <location>
        <begin position="384"/>
        <end position="399"/>
    </location>
</feature>
<feature type="compositionally biased region" description="Basic residues" evidence="2">
    <location>
        <begin position="400"/>
        <end position="409"/>
    </location>
</feature>
<feature type="modified residue" description="Phosphoserine" evidence="8">
    <location>
        <position position="392"/>
    </location>
</feature>
<feature type="mutagenesis site" description="Impairs plasma membrane ingression; when associated with A-31." evidence="3">
    <original>K</original>
    <variation>A</variation>
    <location>
        <position position="28"/>
    </location>
</feature>
<feature type="mutagenesis site" description="Impairs plasma membrane ingression; when associated with A-28." evidence="3">
    <original>K</original>
    <variation>A</variation>
    <location>
        <position position="31"/>
    </location>
</feature>
<feature type="sequence conflict" description="In Ref. 2; AAS56352." evidence="7" ref="2">
    <original>D</original>
    <variation>G</variation>
    <location>
        <position position="221"/>
    </location>
</feature>
<name>INN1_YEAST</name>
<gene>
    <name type="primary">INN1</name>
    <name type="ordered locus">YNL152W</name>
    <name type="ORF">N1765</name>
</gene>
<organism>
    <name type="scientific">Saccharomyces cerevisiae (strain ATCC 204508 / S288c)</name>
    <name type="common">Baker's yeast</name>
    <dbReference type="NCBI Taxonomy" id="559292"/>
    <lineage>
        <taxon>Eukaryota</taxon>
        <taxon>Fungi</taxon>
        <taxon>Dikarya</taxon>
        <taxon>Ascomycota</taxon>
        <taxon>Saccharomycotina</taxon>
        <taxon>Saccharomycetes</taxon>
        <taxon>Saccharomycetales</taxon>
        <taxon>Saccharomycetaceae</taxon>
        <taxon>Saccharomyces</taxon>
    </lineage>
</organism>
<sequence>MSEEVWNGNQGILSVYVSKARDLPNLNKLDKQNVMLRLRIAHMTRASNTLHRAGQNPVFHYLEKFDITPEIKPLMYVEVYCDRRKKSPLPIGRCEIDLLNAIRADPKEGYCTWYELKRSGDEFAGTIFIELTFTPKVPRLNRDDLNKEMDRLDSSMAMRPIPPLPTESEYDYVHGSTMRQITPQCVSTSHEDKDEGQPYRNGNVFSMSSKSDTAVLANSNDPIILPPTFSASMGTTSTLETNDTAISNTSNTKFHFANLRKLKEKINIFKNPDSSTNNCQNESNKVDIEALQKAIGVTSLSYDEDDDDDDENDAFYSSSHRVSHNYNQPPLPPIPTRDDMSNYSSSRNTPLVRRDRPSRLDSSSPNSHPHPSGLNSPKLPPLPTTSNSNFNSRKNSMSPTRKRPPPRLS</sequence>
<proteinExistence type="evidence at protein level"/>